<dbReference type="EC" id="1.1.1.25" evidence="1"/>
<dbReference type="EMBL" id="AM421808">
    <property type="protein sequence ID" value="CAM10981.1"/>
    <property type="molecule type" value="Genomic_DNA"/>
</dbReference>
<dbReference type="RefSeq" id="WP_002220303.1">
    <property type="nucleotide sequence ID" value="NC_008767.1"/>
</dbReference>
<dbReference type="SMR" id="A1KVS6"/>
<dbReference type="KEGG" id="nmc:NMC1810"/>
<dbReference type="HOGENOM" id="CLU_044063_2_1_4"/>
<dbReference type="UniPathway" id="UPA00053">
    <property type="reaction ID" value="UER00087"/>
</dbReference>
<dbReference type="Proteomes" id="UP000002286">
    <property type="component" value="Chromosome"/>
</dbReference>
<dbReference type="GO" id="GO:0005829">
    <property type="term" value="C:cytosol"/>
    <property type="evidence" value="ECO:0007669"/>
    <property type="project" value="TreeGrafter"/>
</dbReference>
<dbReference type="GO" id="GO:0050661">
    <property type="term" value="F:NADP binding"/>
    <property type="evidence" value="ECO:0007669"/>
    <property type="project" value="InterPro"/>
</dbReference>
<dbReference type="GO" id="GO:0004764">
    <property type="term" value="F:shikimate 3-dehydrogenase (NADP+) activity"/>
    <property type="evidence" value="ECO:0007669"/>
    <property type="project" value="UniProtKB-UniRule"/>
</dbReference>
<dbReference type="GO" id="GO:0008652">
    <property type="term" value="P:amino acid biosynthetic process"/>
    <property type="evidence" value="ECO:0007669"/>
    <property type="project" value="UniProtKB-KW"/>
</dbReference>
<dbReference type="GO" id="GO:0009073">
    <property type="term" value="P:aromatic amino acid family biosynthetic process"/>
    <property type="evidence" value="ECO:0007669"/>
    <property type="project" value="UniProtKB-KW"/>
</dbReference>
<dbReference type="GO" id="GO:0009423">
    <property type="term" value="P:chorismate biosynthetic process"/>
    <property type="evidence" value="ECO:0007669"/>
    <property type="project" value="UniProtKB-UniRule"/>
</dbReference>
<dbReference type="GO" id="GO:0019632">
    <property type="term" value="P:shikimate metabolic process"/>
    <property type="evidence" value="ECO:0007669"/>
    <property type="project" value="InterPro"/>
</dbReference>
<dbReference type="CDD" id="cd01065">
    <property type="entry name" value="NAD_bind_Shikimate_DH"/>
    <property type="match status" value="1"/>
</dbReference>
<dbReference type="FunFam" id="3.40.50.10860:FF:000006">
    <property type="entry name" value="Shikimate dehydrogenase (NADP(+))"/>
    <property type="match status" value="1"/>
</dbReference>
<dbReference type="FunFam" id="3.40.50.720:FF:000697">
    <property type="entry name" value="Shikimate dehydrogenase (NADP(+))"/>
    <property type="match status" value="1"/>
</dbReference>
<dbReference type="Gene3D" id="3.40.50.10860">
    <property type="entry name" value="Leucine Dehydrogenase, chain A, domain 1"/>
    <property type="match status" value="1"/>
</dbReference>
<dbReference type="Gene3D" id="3.40.50.720">
    <property type="entry name" value="NAD(P)-binding Rossmann-like Domain"/>
    <property type="match status" value="1"/>
</dbReference>
<dbReference type="HAMAP" id="MF_00222">
    <property type="entry name" value="Shikimate_DH_AroE"/>
    <property type="match status" value="1"/>
</dbReference>
<dbReference type="InterPro" id="IPR046346">
    <property type="entry name" value="Aminoacid_DH-like_N_sf"/>
</dbReference>
<dbReference type="InterPro" id="IPR036291">
    <property type="entry name" value="NAD(P)-bd_dom_sf"/>
</dbReference>
<dbReference type="InterPro" id="IPR041121">
    <property type="entry name" value="SDH_C"/>
</dbReference>
<dbReference type="InterPro" id="IPR011342">
    <property type="entry name" value="Shikimate_DH"/>
</dbReference>
<dbReference type="InterPro" id="IPR013708">
    <property type="entry name" value="Shikimate_DH-bd_N"/>
</dbReference>
<dbReference type="InterPro" id="IPR022893">
    <property type="entry name" value="Shikimate_DH_fam"/>
</dbReference>
<dbReference type="InterPro" id="IPR006151">
    <property type="entry name" value="Shikm_DH/Glu-tRNA_Rdtase"/>
</dbReference>
<dbReference type="NCBIfam" id="TIGR00507">
    <property type="entry name" value="aroE"/>
    <property type="match status" value="1"/>
</dbReference>
<dbReference type="NCBIfam" id="NF001310">
    <property type="entry name" value="PRK00258.1-2"/>
    <property type="match status" value="1"/>
</dbReference>
<dbReference type="PANTHER" id="PTHR21089:SF1">
    <property type="entry name" value="BIFUNCTIONAL 3-DEHYDROQUINATE DEHYDRATASE_SHIKIMATE DEHYDROGENASE, CHLOROPLASTIC"/>
    <property type="match status" value="1"/>
</dbReference>
<dbReference type="PANTHER" id="PTHR21089">
    <property type="entry name" value="SHIKIMATE DEHYDROGENASE"/>
    <property type="match status" value="1"/>
</dbReference>
<dbReference type="Pfam" id="PF18317">
    <property type="entry name" value="SDH_C"/>
    <property type="match status" value="1"/>
</dbReference>
<dbReference type="Pfam" id="PF01488">
    <property type="entry name" value="Shikimate_DH"/>
    <property type="match status" value="1"/>
</dbReference>
<dbReference type="Pfam" id="PF08501">
    <property type="entry name" value="Shikimate_dh_N"/>
    <property type="match status" value="1"/>
</dbReference>
<dbReference type="SUPFAM" id="SSF53223">
    <property type="entry name" value="Aminoacid dehydrogenase-like, N-terminal domain"/>
    <property type="match status" value="1"/>
</dbReference>
<dbReference type="SUPFAM" id="SSF51735">
    <property type="entry name" value="NAD(P)-binding Rossmann-fold domains"/>
    <property type="match status" value="1"/>
</dbReference>
<proteinExistence type="inferred from homology"/>
<gene>
    <name evidence="1" type="primary">aroE</name>
    <name type="ordered locus">NMC1810</name>
</gene>
<organism>
    <name type="scientific">Neisseria meningitidis serogroup C / serotype 2a (strain ATCC 700532 / DSM 15464 / FAM18)</name>
    <dbReference type="NCBI Taxonomy" id="272831"/>
    <lineage>
        <taxon>Bacteria</taxon>
        <taxon>Pseudomonadati</taxon>
        <taxon>Pseudomonadota</taxon>
        <taxon>Betaproteobacteria</taxon>
        <taxon>Neisseriales</taxon>
        <taxon>Neisseriaceae</taxon>
        <taxon>Neisseria</taxon>
    </lineage>
</organism>
<sequence>MTALPRYSVFGNPVAHSKSPQIHQQFALQEGVDIEYERICADIGGFAQAVSTFFETGGCGANVTVPFKQEAFHLADEHSERALAAGAVNTLIPLKNGKLRGDNTDGIGLTNDITQVKNIAIEGKTILLLGAGGAVRGVIPVLKEHRPARIVIANRTRAKAEELAQLFGIEAVPMADVNGGFDIIINGTSGGLNGQIPDIPPDIFQNCALAYDMVYGCAAKPFLDFARQSGAKKTADGLGMLVGQAAASYALWRGFTPDIRPVIEYMKAM</sequence>
<feature type="chain" id="PRO_1000021312" description="Shikimate dehydrogenase (NADP(+))">
    <location>
        <begin position="1"/>
        <end position="269"/>
    </location>
</feature>
<feature type="active site" description="Proton acceptor" evidence="1">
    <location>
        <position position="68"/>
    </location>
</feature>
<feature type="binding site" evidence="1">
    <location>
        <begin position="17"/>
        <end position="19"/>
    </location>
    <ligand>
        <name>shikimate</name>
        <dbReference type="ChEBI" id="CHEBI:36208"/>
    </ligand>
</feature>
<feature type="binding site" evidence="1">
    <location>
        <position position="64"/>
    </location>
    <ligand>
        <name>shikimate</name>
        <dbReference type="ChEBI" id="CHEBI:36208"/>
    </ligand>
</feature>
<feature type="binding site" evidence="1">
    <location>
        <position position="80"/>
    </location>
    <ligand>
        <name>NADP(+)</name>
        <dbReference type="ChEBI" id="CHEBI:58349"/>
    </ligand>
</feature>
<feature type="binding site" evidence="1">
    <location>
        <position position="89"/>
    </location>
    <ligand>
        <name>shikimate</name>
        <dbReference type="ChEBI" id="CHEBI:36208"/>
    </ligand>
</feature>
<feature type="binding site" evidence="1">
    <location>
        <position position="105"/>
    </location>
    <ligand>
        <name>shikimate</name>
        <dbReference type="ChEBI" id="CHEBI:36208"/>
    </ligand>
</feature>
<feature type="binding site" evidence="1">
    <location>
        <begin position="130"/>
        <end position="134"/>
    </location>
    <ligand>
        <name>NADP(+)</name>
        <dbReference type="ChEBI" id="CHEBI:58349"/>
    </ligand>
</feature>
<feature type="binding site" evidence="1">
    <location>
        <begin position="154"/>
        <end position="159"/>
    </location>
    <ligand>
        <name>NADP(+)</name>
        <dbReference type="ChEBI" id="CHEBI:58349"/>
    </ligand>
</feature>
<feature type="binding site" evidence="1">
    <location>
        <position position="213"/>
    </location>
    <ligand>
        <name>NADP(+)</name>
        <dbReference type="ChEBI" id="CHEBI:58349"/>
    </ligand>
</feature>
<feature type="binding site" evidence="1">
    <location>
        <position position="215"/>
    </location>
    <ligand>
        <name>shikimate</name>
        <dbReference type="ChEBI" id="CHEBI:36208"/>
    </ligand>
</feature>
<feature type="binding site" evidence="1">
    <location>
        <position position="237"/>
    </location>
    <ligand>
        <name>NADP(+)</name>
        <dbReference type="ChEBI" id="CHEBI:58349"/>
    </ligand>
</feature>
<reference key="1">
    <citation type="journal article" date="2007" name="PLoS Genet.">
        <title>Meningococcal genetic variation mechanisms viewed through comparative analysis of serogroup C strain FAM18.</title>
        <authorList>
            <person name="Bentley S.D."/>
            <person name="Vernikos G.S."/>
            <person name="Snyder L.A.S."/>
            <person name="Churcher C."/>
            <person name="Arrowsmith C."/>
            <person name="Chillingworth T."/>
            <person name="Cronin A."/>
            <person name="Davis P.H."/>
            <person name="Holroyd N.E."/>
            <person name="Jagels K."/>
            <person name="Maddison M."/>
            <person name="Moule S."/>
            <person name="Rabbinowitsch E."/>
            <person name="Sharp S."/>
            <person name="Unwin L."/>
            <person name="Whitehead S."/>
            <person name="Quail M.A."/>
            <person name="Achtman M."/>
            <person name="Barrell B.G."/>
            <person name="Saunders N.J."/>
            <person name="Parkhill J."/>
        </authorList>
    </citation>
    <scope>NUCLEOTIDE SEQUENCE [LARGE SCALE GENOMIC DNA]</scope>
    <source>
        <strain>ATCC 700532 / DSM 15464 / FAM18</strain>
    </source>
</reference>
<name>AROE_NEIMF</name>
<accession>A1KVS6</accession>
<evidence type="ECO:0000255" key="1">
    <source>
        <dbReference type="HAMAP-Rule" id="MF_00222"/>
    </source>
</evidence>
<comment type="function">
    <text evidence="1">Involved in the biosynthesis of the chorismate, which leads to the biosynthesis of aromatic amino acids. Catalyzes the reversible NADPH linked reduction of 3-dehydroshikimate (DHSA) to yield shikimate (SA).</text>
</comment>
<comment type="catalytic activity">
    <reaction evidence="1">
        <text>shikimate + NADP(+) = 3-dehydroshikimate + NADPH + H(+)</text>
        <dbReference type="Rhea" id="RHEA:17737"/>
        <dbReference type="ChEBI" id="CHEBI:15378"/>
        <dbReference type="ChEBI" id="CHEBI:16630"/>
        <dbReference type="ChEBI" id="CHEBI:36208"/>
        <dbReference type="ChEBI" id="CHEBI:57783"/>
        <dbReference type="ChEBI" id="CHEBI:58349"/>
        <dbReference type="EC" id="1.1.1.25"/>
    </reaction>
</comment>
<comment type="pathway">
    <text evidence="1">Metabolic intermediate biosynthesis; chorismate biosynthesis; chorismate from D-erythrose 4-phosphate and phosphoenolpyruvate: step 4/7.</text>
</comment>
<comment type="subunit">
    <text evidence="1">Homodimer.</text>
</comment>
<comment type="similarity">
    <text evidence="1">Belongs to the shikimate dehydrogenase family.</text>
</comment>
<protein>
    <recommendedName>
        <fullName evidence="1">Shikimate dehydrogenase (NADP(+))</fullName>
        <shortName evidence="1">SDH</shortName>
        <ecNumber evidence="1">1.1.1.25</ecNumber>
    </recommendedName>
</protein>
<keyword id="KW-0028">Amino-acid biosynthesis</keyword>
<keyword id="KW-0057">Aromatic amino acid biosynthesis</keyword>
<keyword id="KW-0521">NADP</keyword>
<keyword id="KW-0560">Oxidoreductase</keyword>